<organism>
    <name type="scientific">Cucumis sativus</name>
    <name type="common">Cucumber</name>
    <dbReference type="NCBI Taxonomy" id="3659"/>
    <lineage>
        <taxon>Eukaryota</taxon>
        <taxon>Viridiplantae</taxon>
        <taxon>Streptophyta</taxon>
        <taxon>Embryophyta</taxon>
        <taxon>Tracheophyta</taxon>
        <taxon>Spermatophyta</taxon>
        <taxon>Magnoliopsida</taxon>
        <taxon>eudicotyledons</taxon>
        <taxon>Gunneridae</taxon>
        <taxon>Pentapetalae</taxon>
        <taxon>rosids</taxon>
        <taxon>fabids</taxon>
        <taxon>Cucurbitales</taxon>
        <taxon>Cucurbitaceae</taxon>
        <taxon>Benincaseae</taxon>
        <taxon>Cucumis</taxon>
    </lineage>
</organism>
<evidence type="ECO:0000250" key="1">
    <source>
        <dbReference type="UniProtKB" id="P26321"/>
    </source>
</evidence>
<evidence type="ECO:0000305" key="2"/>
<sequence>MAFAKAQKTKAYFKRYQVKFKRRREGKTDYRARIRLINQDKNKYNTPKYRFVVRTSNKDITAQIISASIAGDLVLASAYSHELPQYGLEVGLTNYAAAYCTGLLLARRVLKMLEMDAEYEGNVEATGEDYSVEPADTRRPFRALLDVGLIRTTTGNRVFGALKGALDGGLDIPHSDKRFAGYAKNGQQLDVEVHRKYIFGGHVAAYMRTLMEDEPEKYQSHFSEYIKKGIEADELEGLYKKVHAAIRANPIAKKSDKPQPKAHKRYNLKKLTYDERKARLVERLNALNSAADGDDDDDEDDE</sequence>
<keyword id="KW-0963">Cytoplasm</keyword>
<keyword id="KW-0539">Nucleus</keyword>
<keyword id="KW-0687">Ribonucleoprotein</keyword>
<keyword id="KW-0689">Ribosomal protein</keyword>
<keyword id="KW-0694">RNA-binding</keyword>
<keyword id="KW-0699">rRNA-binding</keyword>
<accession>Q6UNT2</accession>
<dbReference type="EMBL" id="AY365248">
    <property type="protein sequence ID" value="AAQ72789.1"/>
    <property type="molecule type" value="mRNA"/>
</dbReference>
<dbReference type="RefSeq" id="NP_001267659.1">
    <property type="nucleotide sequence ID" value="NM_001280730.1"/>
</dbReference>
<dbReference type="SMR" id="Q6UNT2"/>
<dbReference type="EnsemblPlants" id="KGN51654">
    <property type="protein sequence ID" value="KGN51654"/>
    <property type="gene ID" value="Csa_5G588730"/>
</dbReference>
<dbReference type="GeneID" id="101216379"/>
<dbReference type="Gramene" id="KGN51654">
    <property type="protein sequence ID" value="KGN51654"/>
    <property type="gene ID" value="Csa_5G588730"/>
</dbReference>
<dbReference type="KEGG" id="csv:101216379"/>
<dbReference type="eggNOG" id="KOG0875">
    <property type="taxonomic scope" value="Eukaryota"/>
</dbReference>
<dbReference type="OMA" id="CQIASAH"/>
<dbReference type="OrthoDB" id="1618453at2759"/>
<dbReference type="GO" id="GO:0005737">
    <property type="term" value="C:cytoplasm"/>
    <property type="evidence" value="ECO:0007669"/>
    <property type="project" value="UniProtKB-SubCell"/>
</dbReference>
<dbReference type="GO" id="GO:0005634">
    <property type="term" value="C:nucleus"/>
    <property type="evidence" value="ECO:0007669"/>
    <property type="project" value="UniProtKB-SubCell"/>
</dbReference>
<dbReference type="GO" id="GO:1990904">
    <property type="term" value="C:ribonucleoprotein complex"/>
    <property type="evidence" value="ECO:0007669"/>
    <property type="project" value="UniProtKB-KW"/>
</dbReference>
<dbReference type="GO" id="GO:0005840">
    <property type="term" value="C:ribosome"/>
    <property type="evidence" value="ECO:0007669"/>
    <property type="project" value="UniProtKB-KW"/>
</dbReference>
<dbReference type="GO" id="GO:0008097">
    <property type="term" value="F:5S rRNA binding"/>
    <property type="evidence" value="ECO:0007669"/>
    <property type="project" value="InterPro"/>
</dbReference>
<dbReference type="GO" id="GO:0003735">
    <property type="term" value="F:structural constituent of ribosome"/>
    <property type="evidence" value="ECO:0007669"/>
    <property type="project" value="InterPro"/>
</dbReference>
<dbReference type="GO" id="GO:0006412">
    <property type="term" value="P:translation"/>
    <property type="evidence" value="ECO:0007669"/>
    <property type="project" value="InterPro"/>
</dbReference>
<dbReference type="CDD" id="cd00432">
    <property type="entry name" value="Ribosomal_L18_L5e"/>
    <property type="match status" value="1"/>
</dbReference>
<dbReference type="FunFam" id="3.30.420.100:FF:000002">
    <property type="entry name" value="60S ribosomal protein L5"/>
    <property type="match status" value="1"/>
</dbReference>
<dbReference type="Gene3D" id="3.30.420.100">
    <property type="match status" value="1"/>
</dbReference>
<dbReference type="HAMAP" id="MF_01337_A">
    <property type="entry name" value="Ribosomal_uL18_A"/>
    <property type="match status" value="1"/>
</dbReference>
<dbReference type="InterPro" id="IPR005485">
    <property type="entry name" value="Rbsml_uL18_euk"/>
</dbReference>
<dbReference type="InterPro" id="IPR025607">
    <property type="entry name" value="Ribosomal_uL18_C_euk"/>
</dbReference>
<dbReference type="PANTHER" id="PTHR23410:SF35">
    <property type="entry name" value="LARGE RIBOSOMAL SUBUNIT PROTEIN UL18Y-RELATED"/>
    <property type="match status" value="1"/>
</dbReference>
<dbReference type="PANTHER" id="PTHR23410">
    <property type="entry name" value="RIBOSOMAL PROTEIN L5-RELATED"/>
    <property type="match status" value="1"/>
</dbReference>
<dbReference type="Pfam" id="PF14204">
    <property type="entry name" value="Ribosomal_L18_c"/>
    <property type="match status" value="1"/>
</dbReference>
<dbReference type="Pfam" id="PF17144">
    <property type="entry name" value="Ribosomal_L5e"/>
    <property type="match status" value="1"/>
</dbReference>
<dbReference type="PRINTS" id="PR00058">
    <property type="entry name" value="RIBOSOMALL5"/>
</dbReference>
<dbReference type="SUPFAM" id="SSF53137">
    <property type="entry name" value="Translational machinery components"/>
    <property type="match status" value="1"/>
</dbReference>
<comment type="function">
    <text evidence="1">Component of the ribosome, a large ribonucleoprotein complex responsible for the synthesis of proteins in the cell. The small ribosomal subunit (SSU) binds messenger RNAs (mRNAs) and translates the encoded message by selecting cognate aminoacyl-transfer RNA (tRNA) molecules. The large subunit (LSU) contains the ribosomal catalytic site termed the peptidyl transferase center (PTC), which catalyzes the formation of peptide bonds, thereby polymerizing the amino acids delivered by tRNAs into a polypeptide chain. The nascent polypeptides leave the ribosome through a tunnel in the LSU and interact with protein factors that function in enzymatic processing, targeting, and the membrane insertion of nascent chains at the exit of the ribosomal tunnel.</text>
</comment>
<comment type="subunit">
    <text evidence="1">Component of the large ribosomal subunit (LSU).</text>
</comment>
<comment type="subcellular location">
    <subcellularLocation>
        <location evidence="1">Cytoplasm</location>
    </subcellularLocation>
    <subcellularLocation>
        <location evidence="1">Nucleus</location>
    </subcellularLocation>
</comment>
<comment type="similarity">
    <text evidence="2">Belongs to the universal ribosomal protein uL18 family.</text>
</comment>
<reference key="1">
    <citation type="journal article" date="2004" name="Plant Biol.">
        <title>Gene expression analysis in cucumber leaves primed by root colonization with Pseudomonas chlororaphis O6 upon challenge-inoculation with Corynespora cassicola.</title>
        <authorList>
            <person name="Kim M.-S."/>
            <person name="Kim Y.C."/>
            <person name="Cho B.H."/>
        </authorList>
    </citation>
    <scope>NUCLEOTIDE SEQUENCE [MRNA]</scope>
</reference>
<proteinExistence type="evidence at transcript level"/>
<protein>
    <recommendedName>
        <fullName evidence="2">Large ribosomal subunit protein uL18</fullName>
    </recommendedName>
    <alternativeName>
        <fullName>60S ribosomal protein L5</fullName>
    </alternativeName>
</protein>
<gene>
    <name type="primary">RPL5</name>
</gene>
<feature type="chain" id="PRO_0000131445" description="Large ribosomal subunit protein uL18">
    <location>
        <begin position="1"/>
        <end position="302"/>
    </location>
</feature>
<name>RL5_CUCSA</name>